<organism>
    <name type="scientific">Bacillus anthracis</name>
    <dbReference type="NCBI Taxonomy" id="1392"/>
    <lineage>
        <taxon>Bacteria</taxon>
        <taxon>Bacillati</taxon>
        <taxon>Bacillota</taxon>
        <taxon>Bacilli</taxon>
        <taxon>Bacillales</taxon>
        <taxon>Bacillaceae</taxon>
        <taxon>Bacillus</taxon>
        <taxon>Bacillus cereus group</taxon>
    </lineage>
</organism>
<comment type="function">
    <text evidence="1">Cell wall formation. Catalyzes the addition of glutamate to the nucleotide precursor UDP-N-acetylmuramoyl-L-alanine (UMA).</text>
</comment>
<comment type="catalytic activity">
    <reaction evidence="1">
        <text>UDP-N-acetyl-alpha-D-muramoyl-L-alanine + D-glutamate + ATP = UDP-N-acetyl-alpha-D-muramoyl-L-alanyl-D-glutamate + ADP + phosphate + H(+)</text>
        <dbReference type="Rhea" id="RHEA:16429"/>
        <dbReference type="ChEBI" id="CHEBI:15378"/>
        <dbReference type="ChEBI" id="CHEBI:29986"/>
        <dbReference type="ChEBI" id="CHEBI:30616"/>
        <dbReference type="ChEBI" id="CHEBI:43474"/>
        <dbReference type="ChEBI" id="CHEBI:83898"/>
        <dbReference type="ChEBI" id="CHEBI:83900"/>
        <dbReference type="ChEBI" id="CHEBI:456216"/>
        <dbReference type="EC" id="6.3.2.9"/>
    </reaction>
</comment>
<comment type="pathway">
    <text evidence="1">Cell wall biogenesis; peptidoglycan biosynthesis.</text>
</comment>
<comment type="subcellular location">
    <subcellularLocation>
        <location evidence="1">Cytoplasm</location>
    </subcellularLocation>
</comment>
<comment type="similarity">
    <text evidence="1">Belongs to the MurCDEF family.</text>
</comment>
<keyword id="KW-0067">ATP-binding</keyword>
<keyword id="KW-0131">Cell cycle</keyword>
<keyword id="KW-0132">Cell division</keyword>
<keyword id="KW-0133">Cell shape</keyword>
<keyword id="KW-0961">Cell wall biogenesis/degradation</keyword>
<keyword id="KW-0963">Cytoplasm</keyword>
<keyword id="KW-0436">Ligase</keyword>
<keyword id="KW-0547">Nucleotide-binding</keyword>
<keyword id="KW-0573">Peptidoglycan synthesis</keyword>
<keyword id="KW-1185">Reference proteome</keyword>
<protein>
    <recommendedName>
        <fullName evidence="1">UDP-N-acetylmuramoylalanine--D-glutamate ligase</fullName>
        <ecNumber evidence="1">6.3.2.9</ecNumber>
    </recommendedName>
    <alternativeName>
        <fullName evidence="1">D-glutamic acid-adding enzyme</fullName>
    </alternativeName>
    <alternativeName>
        <fullName evidence="1">UDP-N-acetylmuramoyl-L-alanyl-D-glutamate synthetase</fullName>
    </alternativeName>
</protein>
<evidence type="ECO:0000255" key="1">
    <source>
        <dbReference type="HAMAP-Rule" id="MF_00639"/>
    </source>
</evidence>
<name>MURD_BACAN</name>
<reference key="1">
    <citation type="journal article" date="2003" name="Nature">
        <title>The genome sequence of Bacillus anthracis Ames and comparison to closely related bacteria.</title>
        <authorList>
            <person name="Read T.D."/>
            <person name="Peterson S.N."/>
            <person name="Tourasse N.J."/>
            <person name="Baillie L.W."/>
            <person name="Paulsen I.T."/>
            <person name="Nelson K.E."/>
            <person name="Tettelin H."/>
            <person name="Fouts D.E."/>
            <person name="Eisen J.A."/>
            <person name="Gill S.R."/>
            <person name="Holtzapple E.K."/>
            <person name="Okstad O.A."/>
            <person name="Helgason E."/>
            <person name="Rilstone J."/>
            <person name="Wu M."/>
            <person name="Kolonay J.F."/>
            <person name="Beanan M.J."/>
            <person name="Dodson R.J."/>
            <person name="Brinkac L.M."/>
            <person name="Gwinn M.L."/>
            <person name="DeBoy R.T."/>
            <person name="Madpu R."/>
            <person name="Daugherty S.C."/>
            <person name="Durkin A.S."/>
            <person name="Haft D.H."/>
            <person name="Nelson W.C."/>
            <person name="Peterson J.D."/>
            <person name="Pop M."/>
            <person name="Khouri H.M."/>
            <person name="Radune D."/>
            <person name="Benton J.L."/>
            <person name="Mahamoud Y."/>
            <person name="Jiang L."/>
            <person name="Hance I.R."/>
            <person name="Weidman J.F."/>
            <person name="Berry K.J."/>
            <person name="Plaut R.D."/>
            <person name="Wolf A.M."/>
            <person name="Watkins K.L."/>
            <person name="Nierman W.C."/>
            <person name="Hazen A."/>
            <person name="Cline R.T."/>
            <person name="Redmond C."/>
            <person name="Thwaite J.E."/>
            <person name="White O."/>
            <person name="Salzberg S.L."/>
            <person name="Thomason B."/>
            <person name="Friedlander A.M."/>
            <person name="Koehler T.M."/>
            <person name="Hanna P.C."/>
            <person name="Kolstoe A.-B."/>
            <person name="Fraser C.M."/>
        </authorList>
    </citation>
    <scope>NUCLEOTIDE SEQUENCE [LARGE SCALE GENOMIC DNA]</scope>
    <source>
        <strain>Ames / isolate Porton</strain>
    </source>
</reference>
<reference key="2">
    <citation type="journal article" date="2009" name="J. Bacteriol.">
        <title>The complete genome sequence of Bacillus anthracis Ames 'Ancestor'.</title>
        <authorList>
            <person name="Ravel J."/>
            <person name="Jiang L."/>
            <person name="Stanley S.T."/>
            <person name="Wilson M.R."/>
            <person name="Decker R.S."/>
            <person name="Read T.D."/>
            <person name="Worsham P."/>
            <person name="Keim P.S."/>
            <person name="Salzberg S.L."/>
            <person name="Fraser-Liggett C.M."/>
            <person name="Rasko D.A."/>
        </authorList>
    </citation>
    <scope>NUCLEOTIDE SEQUENCE [LARGE SCALE GENOMIC DNA]</scope>
    <source>
        <strain>Ames ancestor</strain>
    </source>
</reference>
<reference key="3">
    <citation type="submission" date="2004-01" db="EMBL/GenBank/DDBJ databases">
        <title>Complete genome sequence of Bacillus anthracis Sterne.</title>
        <authorList>
            <person name="Brettin T.S."/>
            <person name="Bruce D."/>
            <person name="Challacombe J.F."/>
            <person name="Gilna P."/>
            <person name="Han C."/>
            <person name="Hill K."/>
            <person name="Hitchcock P."/>
            <person name="Jackson P."/>
            <person name="Keim P."/>
            <person name="Longmire J."/>
            <person name="Lucas S."/>
            <person name="Okinaka R."/>
            <person name="Richardson P."/>
            <person name="Rubin E."/>
            <person name="Tice H."/>
        </authorList>
    </citation>
    <scope>NUCLEOTIDE SEQUENCE [LARGE SCALE GENOMIC DNA]</scope>
    <source>
        <strain>Sterne</strain>
    </source>
</reference>
<feature type="chain" id="PRO_0000108959" description="UDP-N-acetylmuramoylalanine--D-glutamate ligase">
    <location>
        <begin position="1"/>
        <end position="450"/>
    </location>
</feature>
<feature type="binding site" evidence="1">
    <location>
        <begin position="119"/>
        <end position="125"/>
    </location>
    <ligand>
        <name>ATP</name>
        <dbReference type="ChEBI" id="CHEBI:30616"/>
    </ligand>
</feature>
<sequence length="450" mass="48901">MKTVTEFQNKNILVLGIAKSGYAAATLLQKLGANVIVNDGKPLAENVLAAELQAKGMDVVCGGHPLELLERNISLVVKNPGIPYSNPILVAAKEKQIPIVTEVELAYRISEAPFVGITGSNGKTTTTMLTFEMLKEGQKHPVIAGNIGTVACEVAQDAKENEVVVTELSSFQLMGVELFQPKIAAFLNLFEAHLDYHGTKKEYGLAKANIFKNQTENDYSVINADDADVMALSAYSKGQKVLFSTTKEIEDGACIKDNALYFKAEKVVEVDDIVLPGQHNLENILAAMSIAKLLGVSNEAITAVLKRFTGVKHRLEYVTTINNRKFYNDSKATNMLATEKALSAFTQPTVLLAGGLDRGNEFDDLIPYFKNVKAIVTFGQTAPKLVRAAEKAGLDTIESVDTLDEAVVKAYAHSTDGDVILLSPACASWDQFKTFEERGDIFIQAVHKLI</sequence>
<proteinExistence type="inferred from homology"/>
<dbReference type="EC" id="6.3.2.9" evidence="1"/>
<dbReference type="EMBL" id="AE016879">
    <property type="protein sequence ID" value="AAP27777.1"/>
    <property type="molecule type" value="Genomic_DNA"/>
</dbReference>
<dbReference type="EMBL" id="AE017334">
    <property type="protein sequence ID" value="AAT33168.1"/>
    <property type="molecule type" value="Genomic_DNA"/>
</dbReference>
<dbReference type="EMBL" id="AE017225">
    <property type="protein sequence ID" value="AAT56065.1"/>
    <property type="molecule type" value="Genomic_DNA"/>
</dbReference>
<dbReference type="RefSeq" id="NP_846291.1">
    <property type="nucleotide sequence ID" value="NC_003997.3"/>
</dbReference>
<dbReference type="RefSeq" id="WP_000860119.1">
    <property type="nucleotide sequence ID" value="NZ_WXXJ01000026.1"/>
</dbReference>
<dbReference type="RefSeq" id="YP_030014.1">
    <property type="nucleotide sequence ID" value="NC_005945.1"/>
</dbReference>
<dbReference type="SMR" id="Q81WC9"/>
<dbReference type="IntAct" id="Q81WC9">
    <property type="interactions" value="1"/>
</dbReference>
<dbReference type="STRING" id="261594.GBAA_4051"/>
<dbReference type="DNASU" id="1086094"/>
<dbReference type="GeneID" id="45023741"/>
<dbReference type="KEGG" id="ban:BA_4051"/>
<dbReference type="KEGG" id="banh:HYU01_19810"/>
<dbReference type="KEGG" id="bar:GBAA_4051"/>
<dbReference type="KEGG" id="bat:BAS3763"/>
<dbReference type="PATRIC" id="fig|198094.11.peg.4022"/>
<dbReference type="eggNOG" id="COG0771">
    <property type="taxonomic scope" value="Bacteria"/>
</dbReference>
<dbReference type="HOGENOM" id="CLU_032540_0_1_9"/>
<dbReference type="OMA" id="CSSFDMF"/>
<dbReference type="OrthoDB" id="9809796at2"/>
<dbReference type="UniPathway" id="UPA00219"/>
<dbReference type="Proteomes" id="UP000000427">
    <property type="component" value="Chromosome"/>
</dbReference>
<dbReference type="Proteomes" id="UP000000594">
    <property type="component" value="Chromosome"/>
</dbReference>
<dbReference type="GO" id="GO:0005737">
    <property type="term" value="C:cytoplasm"/>
    <property type="evidence" value="ECO:0007669"/>
    <property type="project" value="UniProtKB-SubCell"/>
</dbReference>
<dbReference type="GO" id="GO:0005524">
    <property type="term" value="F:ATP binding"/>
    <property type="evidence" value="ECO:0007669"/>
    <property type="project" value="UniProtKB-UniRule"/>
</dbReference>
<dbReference type="GO" id="GO:0008764">
    <property type="term" value="F:UDP-N-acetylmuramoylalanine-D-glutamate ligase activity"/>
    <property type="evidence" value="ECO:0007669"/>
    <property type="project" value="UniProtKB-UniRule"/>
</dbReference>
<dbReference type="GO" id="GO:0051301">
    <property type="term" value="P:cell division"/>
    <property type="evidence" value="ECO:0007669"/>
    <property type="project" value="UniProtKB-KW"/>
</dbReference>
<dbReference type="GO" id="GO:0071555">
    <property type="term" value="P:cell wall organization"/>
    <property type="evidence" value="ECO:0007669"/>
    <property type="project" value="UniProtKB-KW"/>
</dbReference>
<dbReference type="GO" id="GO:0009252">
    <property type="term" value="P:peptidoglycan biosynthetic process"/>
    <property type="evidence" value="ECO:0007669"/>
    <property type="project" value="UniProtKB-UniRule"/>
</dbReference>
<dbReference type="GO" id="GO:0008360">
    <property type="term" value="P:regulation of cell shape"/>
    <property type="evidence" value="ECO:0007669"/>
    <property type="project" value="UniProtKB-KW"/>
</dbReference>
<dbReference type="Gene3D" id="3.90.190.20">
    <property type="entry name" value="Mur ligase, C-terminal domain"/>
    <property type="match status" value="1"/>
</dbReference>
<dbReference type="Gene3D" id="3.40.1190.10">
    <property type="entry name" value="Mur-like, catalytic domain"/>
    <property type="match status" value="1"/>
</dbReference>
<dbReference type="Gene3D" id="3.40.50.720">
    <property type="entry name" value="NAD(P)-binding Rossmann-like Domain"/>
    <property type="match status" value="1"/>
</dbReference>
<dbReference type="HAMAP" id="MF_00639">
    <property type="entry name" value="MurD"/>
    <property type="match status" value="1"/>
</dbReference>
<dbReference type="InterPro" id="IPR036565">
    <property type="entry name" value="Mur-like_cat_sf"/>
</dbReference>
<dbReference type="InterPro" id="IPR004101">
    <property type="entry name" value="Mur_ligase_C"/>
</dbReference>
<dbReference type="InterPro" id="IPR036615">
    <property type="entry name" value="Mur_ligase_C_dom_sf"/>
</dbReference>
<dbReference type="InterPro" id="IPR013221">
    <property type="entry name" value="Mur_ligase_cen"/>
</dbReference>
<dbReference type="InterPro" id="IPR005762">
    <property type="entry name" value="MurD"/>
</dbReference>
<dbReference type="NCBIfam" id="TIGR01087">
    <property type="entry name" value="murD"/>
    <property type="match status" value="1"/>
</dbReference>
<dbReference type="PANTHER" id="PTHR43692">
    <property type="entry name" value="UDP-N-ACETYLMURAMOYLALANINE--D-GLUTAMATE LIGASE"/>
    <property type="match status" value="1"/>
</dbReference>
<dbReference type="PANTHER" id="PTHR43692:SF1">
    <property type="entry name" value="UDP-N-ACETYLMURAMOYLALANINE--D-GLUTAMATE LIGASE"/>
    <property type="match status" value="1"/>
</dbReference>
<dbReference type="Pfam" id="PF02875">
    <property type="entry name" value="Mur_ligase_C"/>
    <property type="match status" value="1"/>
</dbReference>
<dbReference type="Pfam" id="PF08245">
    <property type="entry name" value="Mur_ligase_M"/>
    <property type="match status" value="1"/>
</dbReference>
<dbReference type="Pfam" id="PF21799">
    <property type="entry name" value="MurD-like_N"/>
    <property type="match status" value="1"/>
</dbReference>
<dbReference type="SUPFAM" id="SSF51984">
    <property type="entry name" value="MurCD N-terminal domain"/>
    <property type="match status" value="1"/>
</dbReference>
<dbReference type="SUPFAM" id="SSF53623">
    <property type="entry name" value="MurD-like peptide ligases, catalytic domain"/>
    <property type="match status" value="1"/>
</dbReference>
<dbReference type="SUPFAM" id="SSF53244">
    <property type="entry name" value="MurD-like peptide ligases, peptide-binding domain"/>
    <property type="match status" value="1"/>
</dbReference>
<accession>Q81WC9</accession>
<accession>Q6HUH4</accession>
<accession>Q6KNR0</accession>
<gene>
    <name evidence="1" type="primary">murD</name>
    <name type="ordered locus">BA_4051</name>
    <name type="ordered locus">GBAA_4051</name>
    <name type="ordered locus">BAS3763</name>
</gene>